<protein>
    <recommendedName>
        <fullName evidence="1">ATP synthase subunit beta</fullName>
        <ecNumber evidence="1">7.1.2.2</ecNumber>
    </recommendedName>
    <alternativeName>
        <fullName evidence="1">ATP synthase F1 sector subunit beta</fullName>
    </alternativeName>
    <alternativeName>
        <fullName evidence="1">F-ATPase subunit beta</fullName>
    </alternativeName>
</protein>
<feature type="chain" id="PRO_1000214831" description="ATP synthase subunit beta">
    <location>
        <begin position="1"/>
        <end position="473"/>
    </location>
</feature>
<feature type="binding site" evidence="1">
    <location>
        <begin position="153"/>
        <end position="160"/>
    </location>
    <ligand>
        <name>ATP</name>
        <dbReference type="ChEBI" id="CHEBI:30616"/>
    </ligand>
</feature>
<name>ATPB_RICAE</name>
<sequence>MTKNIGKITQIISAVVDVKFTNNGELPEILNALECYNDKHRIVLEVAQHIGDDTVRCIAMDSMEGLVRGVEVIDTGSPIRIPVGTETLGRIMNVVGEPIDGKGDIKSSNISSIYKPAPDFTNQSTERNILVTGIKVIDLLAPYTKGGKIGLFGGAGVGKTVLIMELINNVAKAHGGYTVFAGVGERTREGNDLYHEMIDSGVINLAEPEKSKVALVYGQMNEPPGARARVALSGLTIAESFRDMNEGQDVLFFVDNIFRFTQAGSEVSALLGRIPSAVGYQPTLATDMGELQERITSTKYGSITSVQAIYVPADDLTDPAPATSFAHLDATTVLSRQIAEFGIYPAVDPLDSNSQVLDPMIVGEEHYSVARQVQQVLQTYKSLQDIITILGMDELSEEDKLTVARARKIQRFLSQPFHVAEVFTGAAGKFVNLADTIAGFKGLVEGKYDDLPEAAFYMVGTIDEAIEKAQTLK</sequence>
<evidence type="ECO:0000255" key="1">
    <source>
        <dbReference type="HAMAP-Rule" id="MF_01347"/>
    </source>
</evidence>
<proteinExistence type="inferred from homology"/>
<keyword id="KW-0066">ATP synthesis</keyword>
<keyword id="KW-0067">ATP-binding</keyword>
<keyword id="KW-1003">Cell membrane</keyword>
<keyword id="KW-0139">CF(1)</keyword>
<keyword id="KW-0375">Hydrogen ion transport</keyword>
<keyword id="KW-0406">Ion transport</keyword>
<keyword id="KW-0472">Membrane</keyword>
<keyword id="KW-0547">Nucleotide-binding</keyword>
<keyword id="KW-1278">Translocase</keyword>
<keyword id="KW-0813">Transport</keyword>
<organism>
    <name type="scientific">Rickettsia africae (strain ESF-5)</name>
    <dbReference type="NCBI Taxonomy" id="347255"/>
    <lineage>
        <taxon>Bacteria</taxon>
        <taxon>Pseudomonadati</taxon>
        <taxon>Pseudomonadota</taxon>
        <taxon>Alphaproteobacteria</taxon>
        <taxon>Rickettsiales</taxon>
        <taxon>Rickettsiaceae</taxon>
        <taxon>Rickettsieae</taxon>
        <taxon>Rickettsia</taxon>
        <taxon>spotted fever group</taxon>
    </lineage>
</organism>
<comment type="function">
    <text evidence="1">Produces ATP from ADP in the presence of a proton gradient across the membrane. The catalytic sites are hosted primarily by the beta subunits.</text>
</comment>
<comment type="catalytic activity">
    <reaction evidence="1">
        <text>ATP + H2O + 4 H(+)(in) = ADP + phosphate + 5 H(+)(out)</text>
        <dbReference type="Rhea" id="RHEA:57720"/>
        <dbReference type="ChEBI" id="CHEBI:15377"/>
        <dbReference type="ChEBI" id="CHEBI:15378"/>
        <dbReference type="ChEBI" id="CHEBI:30616"/>
        <dbReference type="ChEBI" id="CHEBI:43474"/>
        <dbReference type="ChEBI" id="CHEBI:456216"/>
        <dbReference type="EC" id="7.1.2.2"/>
    </reaction>
</comment>
<comment type="subunit">
    <text evidence="1">F-type ATPases have 2 components, CF(1) - the catalytic core - and CF(0) - the membrane proton channel. CF(1) has five subunits: alpha(3), beta(3), gamma(1), delta(1), epsilon(1). CF(0) has three main subunits: a(1), b(2) and c(9-12). The alpha and beta chains form an alternating ring which encloses part of the gamma chain. CF(1) is attached to CF(0) by a central stalk formed by the gamma and epsilon chains, while a peripheral stalk is formed by the delta and b chains.</text>
</comment>
<comment type="subcellular location">
    <subcellularLocation>
        <location evidence="1">Cell membrane</location>
        <topology evidence="1">Peripheral membrane protein</topology>
    </subcellularLocation>
</comment>
<comment type="similarity">
    <text evidence="1">Belongs to the ATPase alpha/beta chains family.</text>
</comment>
<gene>
    <name evidence="1" type="primary">atpD</name>
    <name type="ordered locus">RAF_ORF1126</name>
</gene>
<accession>C3PLT1</accession>
<dbReference type="EC" id="7.1.2.2" evidence="1"/>
<dbReference type="EMBL" id="CP001612">
    <property type="protein sequence ID" value="ACP53921.1"/>
    <property type="molecule type" value="Genomic_DNA"/>
</dbReference>
<dbReference type="RefSeq" id="WP_012720049.1">
    <property type="nucleotide sequence ID" value="NC_012633.1"/>
</dbReference>
<dbReference type="SMR" id="C3PLT1"/>
<dbReference type="KEGG" id="raf:RAF_ORF1126"/>
<dbReference type="HOGENOM" id="CLU_022398_0_2_5"/>
<dbReference type="Proteomes" id="UP000002305">
    <property type="component" value="Chromosome"/>
</dbReference>
<dbReference type="GO" id="GO:0005886">
    <property type="term" value="C:plasma membrane"/>
    <property type="evidence" value="ECO:0007669"/>
    <property type="project" value="UniProtKB-SubCell"/>
</dbReference>
<dbReference type="GO" id="GO:0045259">
    <property type="term" value="C:proton-transporting ATP synthase complex"/>
    <property type="evidence" value="ECO:0007669"/>
    <property type="project" value="UniProtKB-KW"/>
</dbReference>
<dbReference type="GO" id="GO:0005524">
    <property type="term" value="F:ATP binding"/>
    <property type="evidence" value="ECO:0007669"/>
    <property type="project" value="UniProtKB-UniRule"/>
</dbReference>
<dbReference type="GO" id="GO:0016887">
    <property type="term" value="F:ATP hydrolysis activity"/>
    <property type="evidence" value="ECO:0007669"/>
    <property type="project" value="InterPro"/>
</dbReference>
<dbReference type="GO" id="GO:0046933">
    <property type="term" value="F:proton-transporting ATP synthase activity, rotational mechanism"/>
    <property type="evidence" value="ECO:0007669"/>
    <property type="project" value="UniProtKB-UniRule"/>
</dbReference>
<dbReference type="CDD" id="cd18110">
    <property type="entry name" value="ATP-synt_F1_beta_C"/>
    <property type="match status" value="1"/>
</dbReference>
<dbReference type="CDD" id="cd18115">
    <property type="entry name" value="ATP-synt_F1_beta_N"/>
    <property type="match status" value="1"/>
</dbReference>
<dbReference type="CDD" id="cd01133">
    <property type="entry name" value="F1-ATPase_beta_CD"/>
    <property type="match status" value="1"/>
</dbReference>
<dbReference type="FunFam" id="1.10.1140.10:FF:000001">
    <property type="entry name" value="ATP synthase subunit beta"/>
    <property type="match status" value="1"/>
</dbReference>
<dbReference type="FunFam" id="2.40.10.170:FF:000014">
    <property type="entry name" value="ATP synthase subunit beta"/>
    <property type="match status" value="1"/>
</dbReference>
<dbReference type="FunFam" id="3.40.50.300:FF:000026">
    <property type="entry name" value="ATP synthase subunit beta"/>
    <property type="match status" value="1"/>
</dbReference>
<dbReference type="Gene3D" id="2.40.10.170">
    <property type="match status" value="1"/>
</dbReference>
<dbReference type="Gene3D" id="1.10.1140.10">
    <property type="entry name" value="Bovine Mitochondrial F1-atpase, Atp Synthase Beta Chain, Chain D, domain 3"/>
    <property type="match status" value="1"/>
</dbReference>
<dbReference type="Gene3D" id="3.40.50.300">
    <property type="entry name" value="P-loop containing nucleotide triphosphate hydrolases"/>
    <property type="match status" value="1"/>
</dbReference>
<dbReference type="HAMAP" id="MF_01347">
    <property type="entry name" value="ATP_synth_beta_bact"/>
    <property type="match status" value="1"/>
</dbReference>
<dbReference type="InterPro" id="IPR003593">
    <property type="entry name" value="AAA+_ATPase"/>
</dbReference>
<dbReference type="InterPro" id="IPR055190">
    <property type="entry name" value="ATP-synt_VA_C"/>
</dbReference>
<dbReference type="InterPro" id="IPR005722">
    <property type="entry name" value="ATP_synth_F1_bsu"/>
</dbReference>
<dbReference type="InterPro" id="IPR020003">
    <property type="entry name" value="ATPase_a/bsu_AS"/>
</dbReference>
<dbReference type="InterPro" id="IPR050053">
    <property type="entry name" value="ATPase_alpha/beta_chains"/>
</dbReference>
<dbReference type="InterPro" id="IPR004100">
    <property type="entry name" value="ATPase_F1/V1/A1_a/bsu_N"/>
</dbReference>
<dbReference type="InterPro" id="IPR036121">
    <property type="entry name" value="ATPase_F1/V1/A1_a/bsu_N_sf"/>
</dbReference>
<dbReference type="InterPro" id="IPR000194">
    <property type="entry name" value="ATPase_F1/V1/A1_a/bsu_nucl-bd"/>
</dbReference>
<dbReference type="InterPro" id="IPR024034">
    <property type="entry name" value="ATPase_F1/V1_b/a_C"/>
</dbReference>
<dbReference type="InterPro" id="IPR027417">
    <property type="entry name" value="P-loop_NTPase"/>
</dbReference>
<dbReference type="NCBIfam" id="TIGR01039">
    <property type="entry name" value="atpD"/>
    <property type="match status" value="1"/>
</dbReference>
<dbReference type="PANTHER" id="PTHR15184">
    <property type="entry name" value="ATP SYNTHASE"/>
    <property type="match status" value="1"/>
</dbReference>
<dbReference type="PANTHER" id="PTHR15184:SF71">
    <property type="entry name" value="ATP SYNTHASE SUBUNIT BETA, MITOCHONDRIAL"/>
    <property type="match status" value="1"/>
</dbReference>
<dbReference type="Pfam" id="PF00006">
    <property type="entry name" value="ATP-synt_ab"/>
    <property type="match status" value="1"/>
</dbReference>
<dbReference type="Pfam" id="PF02874">
    <property type="entry name" value="ATP-synt_ab_N"/>
    <property type="match status" value="1"/>
</dbReference>
<dbReference type="Pfam" id="PF22919">
    <property type="entry name" value="ATP-synt_VA_C"/>
    <property type="match status" value="1"/>
</dbReference>
<dbReference type="PIRSF" id="PIRSF039072">
    <property type="entry name" value="ATPase_subunit_beta"/>
    <property type="match status" value="1"/>
</dbReference>
<dbReference type="SMART" id="SM00382">
    <property type="entry name" value="AAA"/>
    <property type="match status" value="1"/>
</dbReference>
<dbReference type="SUPFAM" id="SSF47917">
    <property type="entry name" value="C-terminal domain of alpha and beta subunits of F1 ATP synthase"/>
    <property type="match status" value="1"/>
</dbReference>
<dbReference type="SUPFAM" id="SSF50615">
    <property type="entry name" value="N-terminal domain of alpha and beta subunits of F1 ATP synthase"/>
    <property type="match status" value="1"/>
</dbReference>
<dbReference type="SUPFAM" id="SSF52540">
    <property type="entry name" value="P-loop containing nucleoside triphosphate hydrolases"/>
    <property type="match status" value="1"/>
</dbReference>
<dbReference type="PROSITE" id="PS00152">
    <property type="entry name" value="ATPASE_ALPHA_BETA"/>
    <property type="match status" value="1"/>
</dbReference>
<reference key="1">
    <citation type="journal article" date="2009" name="BMC Genomics">
        <title>Analysis of the Rickettsia africae genome reveals that virulence acquisition in Rickettsia species may be explained by genome reduction.</title>
        <authorList>
            <person name="Fournier P.-E."/>
            <person name="El Karkouri K."/>
            <person name="Leroy Q."/>
            <person name="Robert C."/>
            <person name="Giumelli B."/>
            <person name="Renesto P."/>
            <person name="Socolovschi C."/>
            <person name="Parola P."/>
            <person name="Audic S."/>
            <person name="Raoult D."/>
        </authorList>
    </citation>
    <scope>NUCLEOTIDE SEQUENCE [LARGE SCALE GENOMIC DNA]</scope>
    <source>
        <strain>ESF-5</strain>
    </source>
</reference>